<sequence>MSFSEFYQRSINEPEQFWAEQARRIDWQTPFTQTLDHSNPPFARWFCEGRTNLCHNAIDRWLEKQPEALALIAVSSETEEERTFTFRQLHDEVNAVASMLRSLGVQRGDRVLVYMPMIAEAHITLLACARIGAIHSVVFGGFASHSVAARIDDAKPVLIVSADAGARGGKIIPYKKLLDDAISQAQHQPRHVLLVDRGLAKMARVSGRDVDFASLRHQHIGARVPVAWLESNETSCILYTSGTTGKPKGVQRDVGGYAVALATSMDTIFGGKAGSVFFCASDIGWVVGHSYIVYAPLLAGMATIVYEGLPTWPDCGVWWTIVEKYQVSRMFSAPTAIRVLKKFPTAEIRKHDLSSLEVLYLAGEPLDEPTASWVSNTLDVPVIDNYWQTESGWPIMAIARGLDDRPTRLGSPGVPMYGYNVQLLNEVTGEPCGVNEKGMLVVEGPLPPGCIQTIWGDDGRFVKTYWSLFSRPVYATFDWGIRDADGYHFILGRTDDVINVAGHRLGTREIEESISSHPGVAEVAVVGVKDALKGQVAVAFVIPKESDSLEDRDVAHSQEKAIMALVDSQIGNFGRPAHVWFVSQLPKTRSGKMLRRTIQAICEGRDPGDLTTIDDPASLDQIRQAMEE</sequence>
<evidence type="ECO:0000250" key="1"/>
<evidence type="ECO:0000305" key="2"/>
<proteinExistence type="inferred from homology"/>
<accession>P77495</accession>
<accession>Q2MC89</accession>
<keyword id="KW-0067">ATP-binding</keyword>
<keyword id="KW-0436">Ligase</keyword>
<keyword id="KW-0547">Nucleotide-binding</keyword>
<keyword id="KW-1185">Reference proteome</keyword>
<comment type="function">
    <text evidence="1">Catalyzes the synthesis of propionyl-CoA from propionate and CoA. Also converts acetate to acetyl-CoA but with a lower specific activity (By similarity).</text>
</comment>
<comment type="catalytic activity">
    <reaction>
        <text>propanoate + ATP + CoA = propanoyl-CoA + AMP + diphosphate</text>
        <dbReference type="Rhea" id="RHEA:20373"/>
        <dbReference type="ChEBI" id="CHEBI:17272"/>
        <dbReference type="ChEBI" id="CHEBI:30616"/>
        <dbReference type="ChEBI" id="CHEBI:33019"/>
        <dbReference type="ChEBI" id="CHEBI:57287"/>
        <dbReference type="ChEBI" id="CHEBI:57392"/>
        <dbReference type="ChEBI" id="CHEBI:456215"/>
        <dbReference type="EC" id="6.2.1.17"/>
    </reaction>
</comment>
<comment type="pathway">
    <text>Organic acid metabolism; propanoate degradation.</text>
</comment>
<comment type="similarity">
    <text evidence="2">Belongs to the ATP-dependent AMP-binding enzyme family.</text>
</comment>
<organism>
    <name type="scientific">Escherichia coli (strain K12)</name>
    <dbReference type="NCBI Taxonomy" id="83333"/>
    <lineage>
        <taxon>Bacteria</taxon>
        <taxon>Pseudomonadati</taxon>
        <taxon>Pseudomonadota</taxon>
        <taxon>Gammaproteobacteria</taxon>
        <taxon>Enterobacterales</taxon>
        <taxon>Enterobacteriaceae</taxon>
        <taxon>Escherichia</taxon>
    </lineage>
</organism>
<name>PRPE_ECOLI</name>
<protein>
    <recommendedName>
        <fullName>Propionate--CoA ligase</fullName>
        <ecNumber>6.2.1.17</ecNumber>
    </recommendedName>
    <alternativeName>
        <fullName>Propionyl-CoA synthetase</fullName>
    </alternativeName>
</protein>
<feature type="chain" id="PRO_0000193188" description="Propionate--CoA ligase">
    <location>
        <begin position="1"/>
        <end position="628"/>
    </location>
</feature>
<gene>
    <name type="primary">prpE</name>
    <name type="synonym">yahU</name>
    <name type="ordered locus">b0335</name>
    <name type="ordered locus">JW0326</name>
</gene>
<reference key="1">
    <citation type="submission" date="1997-01" db="EMBL/GenBank/DDBJ databases">
        <title>Sequence of minutes 4-25 of Escherichia coli.</title>
        <authorList>
            <person name="Chung E."/>
            <person name="Allen E."/>
            <person name="Araujo R."/>
            <person name="Aparicio A.M."/>
            <person name="Davis K."/>
            <person name="Duncan M."/>
            <person name="Federspiel N."/>
            <person name="Hyman R."/>
            <person name="Kalman S."/>
            <person name="Komp C."/>
            <person name="Kurdi O."/>
            <person name="Lew H."/>
            <person name="Lin D."/>
            <person name="Namath A."/>
            <person name="Oefner P."/>
            <person name="Roberts D."/>
            <person name="Schramm S."/>
            <person name="Davis R.W."/>
        </authorList>
    </citation>
    <scope>NUCLEOTIDE SEQUENCE [LARGE SCALE GENOMIC DNA]</scope>
    <source>
        <strain>K12 / MG1655 / ATCC 47076</strain>
    </source>
</reference>
<reference key="2">
    <citation type="journal article" date="1997" name="Science">
        <title>The complete genome sequence of Escherichia coli K-12.</title>
        <authorList>
            <person name="Blattner F.R."/>
            <person name="Plunkett G. III"/>
            <person name="Bloch C.A."/>
            <person name="Perna N.T."/>
            <person name="Burland V."/>
            <person name="Riley M."/>
            <person name="Collado-Vides J."/>
            <person name="Glasner J.D."/>
            <person name="Rode C.K."/>
            <person name="Mayhew G.F."/>
            <person name="Gregor J."/>
            <person name="Davis N.W."/>
            <person name="Kirkpatrick H.A."/>
            <person name="Goeden M.A."/>
            <person name="Rose D.J."/>
            <person name="Mau B."/>
            <person name="Shao Y."/>
        </authorList>
    </citation>
    <scope>NUCLEOTIDE SEQUENCE [LARGE SCALE GENOMIC DNA]</scope>
    <source>
        <strain>K12 / MG1655 / ATCC 47076</strain>
    </source>
</reference>
<reference key="3">
    <citation type="journal article" date="2006" name="Mol. Syst. Biol.">
        <title>Highly accurate genome sequences of Escherichia coli K-12 strains MG1655 and W3110.</title>
        <authorList>
            <person name="Hayashi K."/>
            <person name="Morooka N."/>
            <person name="Yamamoto Y."/>
            <person name="Fujita K."/>
            <person name="Isono K."/>
            <person name="Choi S."/>
            <person name="Ohtsubo E."/>
            <person name="Baba T."/>
            <person name="Wanner B.L."/>
            <person name="Mori H."/>
            <person name="Horiuchi T."/>
        </authorList>
    </citation>
    <scope>NUCLEOTIDE SEQUENCE [LARGE SCALE GENOMIC DNA]</scope>
    <source>
        <strain>K12 / W3110 / ATCC 27325 / DSM 5911</strain>
    </source>
</reference>
<dbReference type="EC" id="6.2.1.17"/>
<dbReference type="EMBL" id="U73857">
    <property type="protein sequence ID" value="AAB18059.1"/>
    <property type="molecule type" value="Genomic_DNA"/>
</dbReference>
<dbReference type="EMBL" id="U00096">
    <property type="protein sequence ID" value="AAC73438.1"/>
    <property type="molecule type" value="Genomic_DNA"/>
</dbReference>
<dbReference type="EMBL" id="AP009048">
    <property type="protein sequence ID" value="BAE76117.1"/>
    <property type="molecule type" value="Genomic_DNA"/>
</dbReference>
<dbReference type="PIR" id="G64760">
    <property type="entry name" value="G64760"/>
</dbReference>
<dbReference type="RefSeq" id="NP_414869.1">
    <property type="nucleotide sequence ID" value="NC_000913.3"/>
</dbReference>
<dbReference type="RefSeq" id="WP_000010288.1">
    <property type="nucleotide sequence ID" value="NZ_LN832404.1"/>
</dbReference>
<dbReference type="SMR" id="P77495"/>
<dbReference type="BioGRID" id="4259811">
    <property type="interactions" value="15"/>
</dbReference>
<dbReference type="FunCoup" id="P77495">
    <property type="interactions" value="255"/>
</dbReference>
<dbReference type="IntAct" id="P77495">
    <property type="interactions" value="7"/>
</dbReference>
<dbReference type="STRING" id="511145.b0335"/>
<dbReference type="PaxDb" id="511145-b0335"/>
<dbReference type="EnsemblBacteria" id="AAC73438">
    <property type="protein sequence ID" value="AAC73438"/>
    <property type="gene ID" value="b0335"/>
</dbReference>
<dbReference type="GeneID" id="946891"/>
<dbReference type="KEGG" id="ecj:JW0326"/>
<dbReference type="KEGG" id="eco:b0335"/>
<dbReference type="KEGG" id="ecoc:C3026_01640"/>
<dbReference type="KEGG" id="ecoc:C3026_24810"/>
<dbReference type="PATRIC" id="fig|1411691.4.peg.1942"/>
<dbReference type="EchoBASE" id="EB3372"/>
<dbReference type="eggNOG" id="COG0365">
    <property type="taxonomic scope" value="Bacteria"/>
</dbReference>
<dbReference type="HOGENOM" id="CLU_000022_3_5_6"/>
<dbReference type="InParanoid" id="P77495"/>
<dbReference type="OMA" id="VDNWWST"/>
<dbReference type="OrthoDB" id="9803968at2"/>
<dbReference type="PhylomeDB" id="P77495"/>
<dbReference type="BioCyc" id="EcoCyc:G6200-MONOMER"/>
<dbReference type="BioCyc" id="MetaCyc:G6200-MONOMER"/>
<dbReference type="BRENDA" id="6.2.1.17">
    <property type="organism ID" value="2026"/>
</dbReference>
<dbReference type="UniPathway" id="UPA00946"/>
<dbReference type="PRO" id="PR:P77495"/>
<dbReference type="Proteomes" id="UP000000625">
    <property type="component" value="Chromosome"/>
</dbReference>
<dbReference type="GO" id="GO:0005524">
    <property type="term" value="F:ATP binding"/>
    <property type="evidence" value="ECO:0007669"/>
    <property type="project" value="UniProtKB-KW"/>
</dbReference>
<dbReference type="GO" id="GO:0050218">
    <property type="term" value="F:propionate-CoA ligase activity"/>
    <property type="evidence" value="ECO:0000314"/>
    <property type="project" value="EcoCyc"/>
</dbReference>
<dbReference type="GO" id="GO:0019629">
    <property type="term" value="P:propionate catabolic process, 2-methylcitrate cycle"/>
    <property type="evidence" value="ECO:0007669"/>
    <property type="project" value="InterPro"/>
</dbReference>
<dbReference type="FunFam" id="3.40.50.12780:FF:000001">
    <property type="entry name" value="Acetyl-coenzyme A synthetase"/>
    <property type="match status" value="1"/>
</dbReference>
<dbReference type="FunFam" id="3.30.300.30:FF:000045">
    <property type="entry name" value="Propionate--CoA ligase"/>
    <property type="match status" value="1"/>
</dbReference>
<dbReference type="Gene3D" id="3.30.300.30">
    <property type="match status" value="1"/>
</dbReference>
<dbReference type="Gene3D" id="3.40.50.12780">
    <property type="entry name" value="N-terminal domain of ligase-like"/>
    <property type="match status" value="1"/>
</dbReference>
<dbReference type="InterPro" id="IPR032387">
    <property type="entry name" value="ACAS_N"/>
</dbReference>
<dbReference type="InterPro" id="IPR025110">
    <property type="entry name" value="AMP-bd_C"/>
</dbReference>
<dbReference type="InterPro" id="IPR045851">
    <property type="entry name" value="AMP-bd_C_sf"/>
</dbReference>
<dbReference type="InterPro" id="IPR020845">
    <property type="entry name" value="AMP-binding_CS"/>
</dbReference>
<dbReference type="InterPro" id="IPR000873">
    <property type="entry name" value="AMP-dep_synth/lig_dom"/>
</dbReference>
<dbReference type="InterPro" id="IPR042099">
    <property type="entry name" value="ANL_N_sf"/>
</dbReference>
<dbReference type="InterPro" id="IPR012694">
    <property type="entry name" value="Propion_PrpE"/>
</dbReference>
<dbReference type="NCBIfam" id="NF001208">
    <property type="entry name" value="PRK00174.1"/>
    <property type="match status" value="1"/>
</dbReference>
<dbReference type="NCBIfam" id="NF007815">
    <property type="entry name" value="PRK10524.1"/>
    <property type="match status" value="1"/>
</dbReference>
<dbReference type="NCBIfam" id="TIGR02316">
    <property type="entry name" value="propion_prpE"/>
    <property type="match status" value="1"/>
</dbReference>
<dbReference type="PANTHER" id="PTHR43347">
    <property type="entry name" value="ACYL-COA SYNTHETASE"/>
    <property type="match status" value="1"/>
</dbReference>
<dbReference type="PANTHER" id="PTHR43347:SF3">
    <property type="entry name" value="ACYL-COA SYNTHETASE SHORT-CHAIN FAMILY MEMBER 3, MITOCHONDRIAL"/>
    <property type="match status" value="1"/>
</dbReference>
<dbReference type="Pfam" id="PF16177">
    <property type="entry name" value="ACAS_N"/>
    <property type="match status" value="1"/>
</dbReference>
<dbReference type="Pfam" id="PF00501">
    <property type="entry name" value="AMP-binding"/>
    <property type="match status" value="1"/>
</dbReference>
<dbReference type="Pfam" id="PF13193">
    <property type="entry name" value="AMP-binding_C"/>
    <property type="match status" value="1"/>
</dbReference>
<dbReference type="SUPFAM" id="SSF56801">
    <property type="entry name" value="Acetyl-CoA synthetase-like"/>
    <property type="match status" value="1"/>
</dbReference>
<dbReference type="PROSITE" id="PS00455">
    <property type="entry name" value="AMP_BINDING"/>
    <property type="match status" value="1"/>
</dbReference>